<evidence type="ECO:0000255" key="1">
    <source>
        <dbReference type="HAMAP-Rule" id="MF_01151"/>
    </source>
</evidence>
<evidence type="ECO:0000256" key="2">
    <source>
        <dbReference type="SAM" id="MobiDB-lite"/>
    </source>
</evidence>
<proteinExistence type="inferred from homology"/>
<sequence length="174" mass="19969">MAQDIKNEEVEEVQEEEVVETAEETTPEKSELDLANERADEFENKYLRAHAEMQNIQRRANEERQNLQRYRSQDLAKAILPSLDNLERALAVEGLTDDVKKGLGMVQESLIHALKEEGIEEIAADGEFDHNYHMAIQTLPADDEHPVDTIAQVFQKGYKLHDRILRPAMVVVYN</sequence>
<organism>
    <name type="scientific">Streptococcus pneumoniae (strain 70585)</name>
    <dbReference type="NCBI Taxonomy" id="488221"/>
    <lineage>
        <taxon>Bacteria</taxon>
        <taxon>Bacillati</taxon>
        <taxon>Bacillota</taxon>
        <taxon>Bacilli</taxon>
        <taxon>Lactobacillales</taxon>
        <taxon>Streptococcaceae</taxon>
        <taxon>Streptococcus</taxon>
    </lineage>
</organism>
<comment type="function">
    <text evidence="1">Participates actively in the response to hyperosmotic and heat shock by preventing the aggregation of stress-denatured proteins, in association with DnaK and GrpE. It is the nucleotide exchange factor for DnaK and may function as a thermosensor. Unfolded proteins bind initially to DnaJ; upon interaction with the DnaJ-bound protein, DnaK hydrolyzes its bound ATP, resulting in the formation of a stable complex. GrpE releases ADP from DnaK; ATP binding to DnaK triggers the release of the substrate protein, thus completing the reaction cycle. Several rounds of ATP-dependent interactions between DnaJ, DnaK and GrpE are required for fully efficient folding.</text>
</comment>
<comment type="subunit">
    <text evidence="1">Homodimer.</text>
</comment>
<comment type="subcellular location">
    <subcellularLocation>
        <location evidence="1">Cytoplasm</location>
    </subcellularLocation>
</comment>
<comment type="similarity">
    <text evidence="1">Belongs to the GrpE family.</text>
</comment>
<reference key="1">
    <citation type="journal article" date="2010" name="Genome Biol.">
        <title>Structure and dynamics of the pan-genome of Streptococcus pneumoniae and closely related species.</title>
        <authorList>
            <person name="Donati C."/>
            <person name="Hiller N.L."/>
            <person name="Tettelin H."/>
            <person name="Muzzi A."/>
            <person name="Croucher N.J."/>
            <person name="Angiuoli S.V."/>
            <person name="Oggioni M."/>
            <person name="Dunning Hotopp J.C."/>
            <person name="Hu F.Z."/>
            <person name="Riley D.R."/>
            <person name="Covacci A."/>
            <person name="Mitchell T.J."/>
            <person name="Bentley S.D."/>
            <person name="Kilian M."/>
            <person name="Ehrlich G.D."/>
            <person name="Rappuoli R."/>
            <person name="Moxon E.R."/>
            <person name="Masignani V."/>
        </authorList>
    </citation>
    <scope>NUCLEOTIDE SEQUENCE [LARGE SCALE GENOMIC DNA]</scope>
    <source>
        <strain>70585</strain>
    </source>
</reference>
<protein>
    <recommendedName>
        <fullName evidence="1">Protein GrpE</fullName>
    </recommendedName>
    <alternativeName>
        <fullName evidence="1">HSP-70 cofactor</fullName>
    </alternativeName>
</protein>
<keyword id="KW-0143">Chaperone</keyword>
<keyword id="KW-0963">Cytoplasm</keyword>
<keyword id="KW-0346">Stress response</keyword>
<accession>C1C5N6</accession>
<name>GRPE_STRP7</name>
<dbReference type="EMBL" id="CP000918">
    <property type="protein sequence ID" value="ACO16544.1"/>
    <property type="molecule type" value="Genomic_DNA"/>
</dbReference>
<dbReference type="RefSeq" id="WP_000046031.1">
    <property type="nucleotide sequence ID" value="NC_012468.1"/>
</dbReference>
<dbReference type="SMR" id="C1C5N6"/>
<dbReference type="GeneID" id="45654056"/>
<dbReference type="KEGG" id="snm:SP70585_0572"/>
<dbReference type="HOGENOM" id="CLU_057217_6_3_9"/>
<dbReference type="Proteomes" id="UP000002211">
    <property type="component" value="Chromosome"/>
</dbReference>
<dbReference type="GO" id="GO:0005737">
    <property type="term" value="C:cytoplasm"/>
    <property type="evidence" value="ECO:0007669"/>
    <property type="project" value="UniProtKB-SubCell"/>
</dbReference>
<dbReference type="GO" id="GO:0000774">
    <property type="term" value="F:adenyl-nucleotide exchange factor activity"/>
    <property type="evidence" value="ECO:0007669"/>
    <property type="project" value="InterPro"/>
</dbReference>
<dbReference type="GO" id="GO:0042803">
    <property type="term" value="F:protein homodimerization activity"/>
    <property type="evidence" value="ECO:0007669"/>
    <property type="project" value="InterPro"/>
</dbReference>
<dbReference type="GO" id="GO:0051087">
    <property type="term" value="F:protein-folding chaperone binding"/>
    <property type="evidence" value="ECO:0007669"/>
    <property type="project" value="InterPro"/>
</dbReference>
<dbReference type="GO" id="GO:0051082">
    <property type="term" value="F:unfolded protein binding"/>
    <property type="evidence" value="ECO:0007669"/>
    <property type="project" value="TreeGrafter"/>
</dbReference>
<dbReference type="GO" id="GO:0006457">
    <property type="term" value="P:protein folding"/>
    <property type="evidence" value="ECO:0007669"/>
    <property type="project" value="InterPro"/>
</dbReference>
<dbReference type="CDD" id="cd00446">
    <property type="entry name" value="GrpE"/>
    <property type="match status" value="1"/>
</dbReference>
<dbReference type="FunFam" id="2.30.22.10:FF:000004">
    <property type="entry name" value="Protein GrpE"/>
    <property type="match status" value="1"/>
</dbReference>
<dbReference type="FunFam" id="3.90.20.20:FF:000007">
    <property type="entry name" value="Protein GrpE"/>
    <property type="match status" value="1"/>
</dbReference>
<dbReference type="Gene3D" id="3.90.20.20">
    <property type="match status" value="1"/>
</dbReference>
<dbReference type="Gene3D" id="2.30.22.10">
    <property type="entry name" value="Head domain of nucleotide exchange factor GrpE"/>
    <property type="match status" value="1"/>
</dbReference>
<dbReference type="HAMAP" id="MF_01151">
    <property type="entry name" value="GrpE"/>
    <property type="match status" value="1"/>
</dbReference>
<dbReference type="InterPro" id="IPR000740">
    <property type="entry name" value="GrpE"/>
</dbReference>
<dbReference type="InterPro" id="IPR013805">
    <property type="entry name" value="GrpE_coiled_coil"/>
</dbReference>
<dbReference type="InterPro" id="IPR009012">
    <property type="entry name" value="GrpE_head"/>
</dbReference>
<dbReference type="NCBIfam" id="NF010738">
    <property type="entry name" value="PRK14140.1"/>
    <property type="match status" value="1"/>
</dbReference>
<dbReference type="NCBIfam" id="NF010753">
    <property type="entry name" value="PRK14156.1"/>
    <property type="match status" value="1"/>
</dbReference>
<dbReference type="NCBIfam" id="NF010759">
    <property type="entry name" value="PRK14162.1"/>
    <property type="match status" value="1"/>
</dbReference>
<dbReference type="PANTHER" id="PTHR21237">
    <property type="entry name" value="GRPE PROTEIN"/>
    <property type="match status" value="1"/>
</dbReference>
<dbReference type="PANTHER" id="PTHR21237:SF23">
    <property type="entry name" value="GRPE PROTEIN HOMOLOG, MITOCHONDRIAL"/>
    <property type="match status" value="1"/>
</dbReference>
<dbReference type="Pfam" id="PF01025">
    <property type="entry name" value="GrpE"/>
    <property type="match status" value="1"/>
</dbReference>
<dbReference type="PRINTS" id="PR00773">
    <property type="entry name" value="GRPEPROTEIN"/>
</dbReference>
<dbReference type="SUPFAM" id="SSF58014">
    <property type="entry name" value="Coiled-coil domain of nucleotide exchange factor GrpE"/>
    <property type="match status" value="1"/>
</dbReference>
<dbReference type="SUPFAM" id="SSF51064">
    <property type="entry name" value="Head domain of nucleotide exchange factor GrpE"/>
    <property type="match status" value="1"/>
</dbReference>
<dbReference type="PROSITE" id="PS01071">
    <property type="entry name" value="GRPE"/>
    <property type="match status" value="1"/>
</dbReference>
<feature type="chain" id="PRO_1000164218" description="Protein GrpE">
    <location>
        <begin position="1"/>
        <end position="174"/>
    </location>
</feature>
<feature type="region of interest" description="Disordered" evidence="2">
    <location>
        <begin position="1"/>
        <end position="35"/>
    </location>
</feature>
<feature type="compositionally biased region" description="Acidic residues" evidence="2">
    <location>
        <begin position="9"/>
        <end position="25"/>
    </location>
</feature>
<feature type="compositionally biased region" description="Basic and acidic residues" evidence="2">
    <location>
        <begin position="26"/>
        <end position="35"/>
    </location>
</feature>
<gene>
    <name evidence="1" type="primary">grpE</name>
    <name type="ordered locus">SP70585_0572</name>
</gene>